<feature type="chain" id="PRO_1000213784" description="UPF0434 protein PC1_1771">
    <location>
        <begin position="1"/>
        <end position="60"/>
    </location>
</feature>
<accession>C6DFA3</accession>
<gene>
    <name type="ordered locus">PC1_1771</name>
</gene>
<dbReference type="EMBL" id="CP001657">
    <property type="protein sequence ID" value="ACT12812.1"/>
    <property type="molecule type" value="Genomic_DNA"/>
</dbReference>
<dbReference type="RefSeq" id="WP_015840020.1">
    <property type="nucleotide sequence ID" value="NC_012917.1"/>
</dbReference>
<dbReference type="SMR" id="C6DFA3"/>
<dbReference type="STRING" id="561230.PC1_1771"/>
<dbReference type="KEGG" id="pct:PC1_1771"/>
<dbReference type="eggNOG" id="COG2835">
    <property type="taxonomic scope" value="Bacteria"/>
</dbReference>
<dbReference type="HOGENOM" id="CLU_155659_3_1_6"/>
<dbReference type="OrthoDB" id="9812205at2"/>
<dbReference type="Proteomes" id="UP000002736">
    <property type="component" value="Chromosome"/>
</dbReference>
<dbReference type="GO" id="GO:0005829">
    <property type="term" value="C:cytosol"/>
    <property type="evidence" value="ECO:0007669"/>
    <property type="project" value="TreeGrafter"/>
</dbReference>
<dbReference type="FunFam" id="2.20.25.10:FF:000002">
    <property type="entry name" value="UPF0434 protein YcaR"/>
    <property type="match status" value="1"/>
</dbReference>
<dbReference type="Gene3D" id="2.20.25.10">
    <property type="match status" value="1"/>
</dbReference>
<dbReference type="HAMAP" id="MF_01187">
    <property type="entry name" value="UPF0434"/>
    <property type="match status" value="1"/>
</dbReference>
<dbReference type="InterPro" id="IPR005651">
    <property type="entry name" value="Trm112-like"/>
</dbReference>
<dbReference type="PANTHER" id="PTHR33505:SF4">
    <property type="entry name" value="PROTEIN PREY, MITOCHONDRIAL"/>
    <property type="match status" value="1"/>
</dbReference>
<dbReference type="PANTHER" id="PTHR33505">
    <property type="entry name" value="ZGC:162634"/>
    <property type="match status" value="1"/>
</dbReference>
<dbReference type="Pfam" id="PF03966">
    <property type="entry name" value="Trm112p"/>
    <property type="match status" value="1"/>
</dbReference>
<dbReference type="SUPFAM" id="SSF158997">
    <property type="entry name" value="Trm112p-like"/>
    <property type="match status" value="1"/>
</dbReference>
<sequence>MDHRLLEIVACPVCNGRLYFNKEKLELICKVDGLAYPVRDGIPVLLENEARKLGVDEITQ</sequence>
<proteinExistence type="inferred from homology"/>
<comment type="similarity">
    <text evidence="1">Belongs to the UPF0434 family.</text>
</comment>
<name>Y1771_PECCP</name>
<organism>
    <name type="scientific">Pectobacterium carotovorum subsp. carotovorum (strain PC1)</name>
    <dbReference type="NCBI Taxonomy" id="561230"/>
    <lineage>
        <taxon>Bacteria</taxon>
        <taxon>Pseudomonadati</taxon>
        <taxon>Pseudomonadota</taxon>
        <taxon>Gammaproteobacteria</taxon>
        <taxon>Enterobacterales</taxon>
        <taxon>Pectobacteriaceae</taxon>
        <taxon>Pectobacterium</taxon>
    </lineage>
</organism>
<protein>
    <recommendedName>
        <fullName evidence="1">UPF0434 protein PC1_1771</fullName>
    </recommendedName>
</protein>
<evidence type="ECO:0000255" key="1">
    <source>
        <dbReference type="HAMAP-Rule" id="MF_01187"/>
    </source>
</evidence>
<reference key="1">
    <citation type="submission" date="2009-07" db="EMBL/GenBank/DDBJ databases">
        <title>Complete sequence of Pectobacterium carotovorum subsp. carotovorum PC1.</title>
        <authorList>
            <consortium name="US DOE Joint Genome Institute"/>
            <person name="Lucas S."/>
            <person name="Copeland A."/>
            <person name="Lapidus A."/>
            <person name="Glavina del Rio T."/>
            <person name="Tice H."/>
            <person name="Bruce D."/>
            <person name="Goodwin L."/>
            <person name="Pitluck S."/>
            <person name="Munk A.C."/>
            <person name="Brettin T."/>
            <person name="Detter J.C."/>
            <person name="Han C."/>
            <person name="Tapia R."/>
            <person name="Larimer F."/>
            <person name="Land M."/>
            <person name="Hauser L."/>
            <person name="Kyrpides N."/>
            <person name="Mikhailova N."/>
            <person name="Balakrishnan V."/>
            <person name="Glasner J."/>
            <person name="Perna N.T."/>
        </authorList>
    </citation>
    <scope>NUCLEOTIDE SEQUENCE [LARGE SCALE GENOMIC DNA]</scope>
    <source>
        <strain>PC1</strain>
    </source>
</reference>